<organism>
    <name type="scientific">Staphylococcus aureus (strain USA300 / TCH1516)</name>
    <dbReference type="NCBI Taxonomy" id="451516"/>
    <lineage>
        <taxon>Bacteria</taxon>
        <taxon>Bacillati</taxon>
        <taxon>Bacillota</taxon>
        <taxon>Bacilli</taxon>
        <taxon>Bacillales</taxon>
        <taxon>Staphylococcaceae</taxon>
        <taxon>Staphylococcus</taxon>
    </lineage>
</organism>
<protein>
    <recommendedName>
        <fullName evidence="1">Valine--tRNA ligase</fullName>
        <ecNumber evidence="1">6.1.1.9</ecNumber>
    </recommendedName>
    <alternativeName>
        <fullName evidence="1">Valyl-tRNA synthetase</fullName>
        <shortName evidence="1">ValRS</shortName>
    </alternativeName>
</protein>
<comment type="function">
    <text evidence="1">Catalyzes the attachment of valine to tRNA(Val). As ValRS can inadvertently accommodate and process structurally similar amino acids such as threonine, to avoid such errors, it has a 'posttransfer' editing activity that hydrolyzes mischarged Thr-tRNA(Val) in a tRNA-dependent manner.</text>
</comment>
<comment type="catalytic activity">
    <reaction evidence="1">
        <text>tRNA(Val) + L-valine + ATP = L-valyl-tRNA(Val) + AMP + diphosphate</text>
        <dbReference type="Rhea" id="RHEA:10704"/>
        <dbReference type="Rhea" id="RHEA-COMP:9672"/>
        <dbReference type="Rhea" id="RHEA-COMP:9708"/>
        <dbReference type="ChEBI" id="CHEBI:30616"/>
        <dbReference type="ChEBI" id="CHEBI:33019"/>
        <dbReference type="ChEBI" id="CHEBI:57762"/>
        <dbReference type="ChEBI" id="CHEBI:78442"/>
        <dbReference type="ChEBI" id="CHEBI:78537"/>
        <dbReference type="ChEBI" id="CHEBI:456215"/>
        <dbReference type="EC" id="6.1.1.9"/>
    </reaction>
</comment>
<comment type="subunit">
    <text evidence="1">Monomer.</text>
</comment>
<comment type="subcellular location">
    <subcellularLocation>
        <location evidence="1">Cytoplasm</location>
    </subcellularLocation>
</comment>
<comment type="domain">
    <text evidence="1">ValRS has two distinct active sites: one for aminoacylation and one for editing. The misactivated threonine is translocated from the active site to the editing site.</text>
</comment>
<comment type="domain">
    <text evidence="1">The C-terminal coiled-coil domain is crucial for aminoacylation activity.</text>
</comment>
<comment type="similarity">
    <text evidence="1">Belongs to the class-I aminoacyl-tRNA synthetase family. ValS type 1 subfamily.</text>
</comment>
<feature type="chain" id="PRO_1000088567" description="Valine--tRNA ligase">
    <location>
        <begin position="1"/>
        <end position="876"/>
    </location>
</feature>
<feature type="coiled-coil region" evidence="1">
    <location>
        <begin position="805"/>
        <end position="876"/>
    </location>
</feature>
<feature type="short sequence motif" description="'HIGH' region">
    <location>
        <begin position="44"/>
        <end position="54"/>
    </location>
</feature>
<feature type="short sequence motif" description="'KMSKS' region">
    <location>
        <begin position="520"/>
        <end position="524"/>
    </location>
</feature>
<feature type="binding site" evidence="1">
    <location>
        <position position="523"/>
    </location>
    <ligand>
        <name>ATP</name>
        <dbReference type="ChEBI" id="CHEBI:30616"/>
    </ligand>
</feature>
<accession>A8Z2I4</accession>
<evidence type="ECO:0000255" key="1">
    <source>
        <dbReference type="HAMAP-Rule" id="MF_02004"/>
    </source>
</evidence>
<sequence>MEMKPKYDPREVEAGRYEEWVKNGYFKPSEDKSKETYTIVIPPPNVTGKLHLGHAWDTTLQDIITRMKRMQGYDTLYLPGMDHAGIATQAKVEAKLNEQGITRYDLGREKFLEQAWDWKEEYASFIRAQWAKLGLGLDYSRERFTLDEGLSKAVKKVFVDLYNKGIIYRGERIINWDPKARTALSDIEVIHEDVQGAFYHFKYPYADGEGFIEIATTRPETMLGDTAIVVNPNDERYKDVIGKTVILPIVGRELPILADEYVDIDFGSGAMKVTPAHDPNDFEIGQRHQLENIIVMDENGKMNDKAGKYEGMDRFDCRKQLVKDLKEQDLVIKIEDHVHSVGHSERSGAVVEPYLSTQWFVRMEDLAKRSLDNQKTDDRIDFYPQRFEHTFNQWMENIRDWTISRQLWWGHQIPAWYHKETGEIYVGEEAPTDIENWQQDEDVLDTWFSSALWPFSTLGWPDLESEDFKRYYPTNALVTGYDIIFFWVARMIFQGLEFTDRRPFNDVLLHGLVRAEDGRKMSKSLGNGVDPMDVIDEYGADSLRYFLATGSSPGHDLRYSTEKVESVWNFINKIWNGARFSLMNIGEDFKVEDIDLSGNLSLADKWILTRLNETIATVTDLSDKYEFGEVGRALYNFIWDDFCDWYIEMSKIPMNSNDEEQKQVTRSVLSYTLDNIMRMLHPFMPFVTEKIWQSLPHEGDTIVKASWPEVRESLIFEESKQTMQQLVEIIKSVRQSRVEVNTPLSKEIPILIQAKDKEIETTLSQNKDYLIKFCNPSTLNISTDVEIPEKAMTSVVIAGKVVLPLEGLIDMDKEISRLEKELAKLQSELDRVDKKLSNENFVSKAPEKVINEEKRKKQDYQEKYDGVKARIEQLKA</sequence>
<gene>
    <name evidence="1" type="primary">valS</name>
    <name type="ordered locus">USA300HOU_1655</name>
</gene>
<proteinExistence type="inferred from homology"/>
<keyword id="KW-0030">Aminoacyl-tRNA synthetase</keyword>
<keyword id="KW-0067">ATP-binding</keyword>
<keyword id="KW-0175">Coiled coil</keyword>
<keyword id="KW-0963">Cytoplasm</keyword>
<keyword id="KW-0436">Ligase</keyword>
<keyword id="KW-0547">Nucleotide-binding</keyword>
<keyword id="KW-0648">Protein biosynthesis</keyword>
<reference key="1">
    <citation type="journal article" date="2007" name="BMC Microbiol.">
        <title>Subtle genetic changes enhance virulence of methicillin resistant and sensitive Staphylococcus aureus.</title>
        <authorList>
            <person name="Highlander S.K."/>
            <person name="Hulten K.G."/>
            <person name="Qin X."/>
            <person name="Jiang H."/>
            <person name="Yerrapragada S."/>
            <person name="Mason E.O. Jr."/>
            <person name="Shang Y."/>
            <person name="Williams T.M."/>
            <person name="Fortunov R.M."/>
            <person name="Liu Y."/>
            <person name="Igboeli O."/>
            <person name="Petrosino J."/>
            <person name="Tirumalai M."/>
            <person name="Uzman A."/>
            <person name="Fox G.E."/>
            <person name="Cardenas A.M."/>
            <person name="Muzny D.M."/>
            <person name="Hemphill L."/>
            <person name="Ding Y."/>
            <person name="Dugan S."/>
            <person name="Blyth P.R."/>
            <person name="Buhay C.J."/>
            <person name="Dinh H.H."/>
            <person name="Hawes A.C."/>
            <person name="Holder M."/>
            <person name="Kovar C.L."/>
            <person name="Lee S.L."/>
            <person name="Liu W."/>
            <person name="Nazareth L.V."/>
            <person name="Wang Q."/>
            <person name="Zhou J."/>
            <person name="Kaplan S.L."/>
            <person name="Weinstock G.M."/>
        </authorList>
    </citation>
    <scope>NUCLEOTIDE SEQUENCE [LARGE SCALE GENOMIC DNA]</scope>
    <source>
        <strain>USA300 / TCH1516</strain>
    </source>
</reference>
<name>SYV_STAAT</name>
<dbReference type="EC" id="6.1.1.9" evidence="1"/>
<dbReference type="EMBL" id="CP000730">
    <property type="protein sequence ID" value="ABX29662.1"/>
    <property type="molecule type" value="Genomic_DNA"/>
</dbReference>
<dbReference type="RefSeq" id="WP_000425353.1">
    <property type="nucleotide sequence ID" value="NC_010079.1"/>
</dbReference>
<dbReference type="SMR" id="A8Z2I4"/>
<dbReference type="KEGG" id="sax:USA300HOU_1655"/>
<dbReference type="HOGENOM" id="CLU_001493_0_2_9"/>
<dbReference type="GO" id="GO:0005829">
    <property type="term" value="C:cytosol"/>
    <property type="evidence" value="ECO:0007669"/>
    <property type="project" value="TreeGrafter"/>
</dbReference>
<dbReference type="GO" id="GO:0002161">
    <property type="term" value="F:aminoacyl-tRNA deacylase activity"/>
    <property type="evidence" value="ECO:0007669"/>
    <property type="project" value="InterPro"/>
</dbReference>
<dbReference type="GO" id="GO:0005524">
    <property type="term" value="F:ATP binding"/>
    <property type="evidence" value="ECO:0007669"/>
    <property type="project" value="UniProtKB-UniRule"/>
</dbReference>
<dbReference type="GO" id="GO:0004832">
    <property type="term" value="F:valine-tRNA ligase activity"/>
    <property type="evidence" value="ECO:0007669"/>
    <property type="project" value="UniProtKB-UniRule"/>
</dbReference>
<dbReference type="GO" id="GO:0006438">
    <property type="term" value="P:valyl-tRNA aminoacylation"/>
    <property type="evidence" value="ECO:0007669"/>
    <property type="project" value="UniProtKB-UniRule"/>
</dbReference>
<dbReference type="CDD" id="cd07962">
    <property type="entry name" value="Anticodon_Ia_Val"/>
    <property type="match status" value="1"/>
</dbReference>
<dbReference type="CDD" id="cd00817">
    <property type="entry name" value="ValRS_core"/>
    <property type="match status" value="1"/>
</dbReference>
<dbReference type="FunFam" id="1.10.287.380:FF:000001">
    <property type="entry name" value="Valine--tRNA ligase"/>
    <property type="match status" value="1"/>
</dbReference>
<dbReference type="FunFam" id="1.10.730.10:FF:000014">
    <property type="entry name" value="Valine--tRNA ligase"/>
    <property type="match status" value="1"/>
</dbReference>
<dbReference type="FunFam" id="3.40.50.620:FF:000032">
    <property type="entry name" value="Valine--tRNA ligase"/>
    <property type="match status" value="1"/>
</dbReference>
<dbReference type="FunFam" id="3.40.50.620:FF:000098">
    <property type="entry name" value="Valine--tRNA ligase"/>
    <property type="match status" value="1"/>
</dbReference>
<dbReference type="FunFam" id="3.90.740.10:FF:000005">
    <property type="entry name" value="Valine--tRNA ligase, mitochondrial"/>
    <property type="match status" value="1"/>
</dbReference>
<dbReference type="Gene3D" id="3.40.50.620">
    <property type="entry name" value="HUPs"/>
    <property type="match status" value="2"/>
</dbReference>
<dbReference type="Gene3D" id="1.10.730.10">
    <property type="entry name" value="Isoleucyl-tRNA Synthetase, Domain 1"/>
    <property type="match status" value="1"/>
</dbReference>
<dbReference type="Gene3D" id="1.10.287.380">
    <property type="entry name" value="Valyl-tRNA synthetase, C-terminal domain"/>
    <property type="match status" value="1"/>
</dbReference>
<dbReference type="Gene3D" id="3.90.740.10">
    <property type="entry name" value="Valyl/Leucyl/Isoleucyl-tRNA synthetase, editing domain"/>
    <property type="match status" value="1"/>
</dbReference>
<dbReference type="HAMAP" id="MF_02004">
    <property type="entry name" value="Val_tRNA_synth_type1"/>
    <property type="match status" value="1"/>
</dbReference>
<dbReference type="InterPro" id="IPR001412">
    <property type="entry name" value="aa-tRNA-synth_I_CS"/>
</dbReference>
<dbReference type="InterPro" id="IPR002300">
    <property type="entry name" value="aa-tRNA-synth_Ia"/>
</dbReference>
<dbReference type="InterPro" id="IPR033705">
    <property type="entry name" value="Anticodon_Ia_Val"/>
</dbReference>
<dbReference type="InterPro" id="IPR013155">
    <property type="entry name" value="M/V/L/I-tRNA-synth_anticd-bd"/>
</dbReference>
<dbReference type="InterPro" id="IPR014729">
    <property type="entry name" value="Rossmann-like_a/b/a_fold"/>
</dbReference>
<dbReference type="InterPro" id="IPR010978">
    <property type="entry name" value="tRNA-bd_arm"/>
</dbReference>
<dbReference type="InterPro" id="IPR009080">
    <property type="entry name" value="tRNAsynth_Ia_anticodon-bd"/>
</dbReference>
<dbReference type="InterPro" id="IPR037118">
    <property type="entry name" value="Val-tRNA_synth_C_sf"/>
</dbReference>
<dbReference type="InterPro" id="IPR019499">
    <property type="entry name" value="Val-tRNA_synth_tRNA-bd"/>
</dbReference>
<dbReference type="InterPro" id="IPR009008">
    <property type="entry name" value="Val/Leu/Ile-tRNA-synth_edit"/>
</dbReference>
<dbReference type="InterPro" id="IPR002303">
    <property type="entry name" value="Valyl-tRNA_ligase"/>
</dbReference>
<dbReference type="NCBIfam" id="NF004349">
    <property type="entry name" value="PRK05729.1"/>
    <property type="match status" value="1"/>
</dbReference>
<dbReference type="NCBIfam" id="TIGR00422">
    <property type="entry name" value="valS"/>
    <property type="match status" value="1"/>
</dbReference>
<dbReference type="PANTHER" id="PTHR11946:SF93">
    <property type="entry name" value="VALINE--TRNA LIGASE, CHLOROPLASTIC_MITOCHONDRIAL 2"/>
    <property type="match status" value="1"/>
</dbReference>
<dbReference type="PANTHER" id="PTHR11946">
    <property type="entry name" value="VALYL-TRNA SYNTHETASES"/>
    <property type="match status" value="1"/>
</dbReference>
<dbReference type="Pfam" id="PF08264">
    <property type="entry name" value="Anticodon_1"/>
    <property type="match status" value="1"/>
</dbReference>
<dbReference type="Pfam" id="PF00133">
    <property type="entry name" value="tRNA-synt_1"/>
    <property type="match status" value="1"/>
</dbReference>
<dbReference type="Pfam" id="PF10458">
    <property type="entry name" value="Val_tRNA-synt_C"/>
    <property type="match status" value="1"/>
</dbReference>
<dbReference type="PRINTS" id="PR00986">
    <property type="entry name" value="TRNASYNTHVAL"/>
</dbReference>
<dbReference type="SUPFAM" id="SSF47323">
    <property type="entry name" value="Anticodon-binding domain of a subclass of class I aminoacyl-tRNA synthetases"/>
    <property type="match status" value="1"/>
</dbReference>
<dbReference type="SUPFAM" id="SSF52374">
    <property type="entry name" value="Nucleotidylyl transferase"/>
    <property type="match status" value="1"/>
</dbReference>
<dbReference type="SUPFAM" id="SSF46589">
    <property type="entry name" value="tRNA-binding arm"/>
    <property type="match status" value="1"/>
</dbReference>
<dbReference type="SUPFAM" id="SSF50677">
    <property type="entry name" value="ValRS/IleRS/LeuRS editing domain"/>
    <property type="match status" value="1"/>
</dbReference>
<dbReference type="PROSITE" id="PS00178">
    <property type="entry name" value="AA_TRNA_LIGASE_I"/>
    <property type="match status" value="1"/>
</dbReference>